<name>PYRF_PENCH</name>
<organism>
    <name type="scientific">Penicillium chrysogenum</name>
    <name type="common">Penicillium notatum</name>
    <dbReference type="NCBI Taxonomy" id="5076"/>
    <lineage>
        <taxon>Eukaryota</taxon>
        <taxon>Fungi</taxon>
        <taxon>Dikarya</taxon>
        <taxon>Ascomycota</taxon>
        <taxon>Pezizomycotina</taxon>
        <taxon>Eurotiomycetes</taxon>
        <taxon>Eurotiomycetidae</taxon>
        <taxon>Eurotiales</taxon>
        <taxon>Aspergillaceae</taxon>
        <taxon>Penicillium</taxon>
        <taxon>Penicillium chrysogenum species complex</taxon>
    </lineage>
</organism>
<proteinExistence type="inferred from homology"/>
<gene>
    <name type="primary">pyrG</name>
</gene>
<protein>
    <recommendedName>
        <fullName>Orotidine 5'-phosphate decarboxylase</fullName>
        <ecNumber>4.1.1.23</ecNumber>
    </recommendedName>
    <alternativeName>
        <fullName>OMP decarboxylase</fullName>
        <shortName>OMPDCase</shortName>
        <shortName>OMPdecase</shortName>
    </alternativeName>
    <alternativeName>
        <fullName>Uridine 5'-monophosphate synthase</fullName>
        <shortName>UMP synthase</shortName>
    </alternativeName>
</protein>
<feature type="chain" id="PRO_0000134669" description="Orotidine 5'-phosphate decarboxylase">
    <location>
        <begin position="1"/>
        <end position="278"/>
    </location>
</feature>
<feature type="active site" description="Proton donor" evidence="2">
    <location>
        <position position="98"/>
    </location>
</feature>
<feature type="binding site" evidence="1">
    <location>
        <position position="40"/>
    </location>
    <ligand>
        <name>substrate</name>
    </ligand>
</feature>
<feature type="binding site" evidence="1">
    <location>
        <begin position="65"/>
        <end position="67"/>
    </location>
    <ligand>
        <name>substrate</name>
    </ligand>
</feature>
<feature type="binding site" evidence="1">
    <location>
        <begin position="96"/>
        <end position="105"/>
    </location>
    <ligand>
        <name>substrate</name>
    </ligand>
</feature>
<feature type="binding site" evidence="1">
    <location>
        <position position="230"/>
    </location>
    <ligand>
        <name>substrate</name>
    </ligand>
</feature>
<feature type="binding site" evidence="1">
    <location>
        <position position="248"/>
    </location>
    <ligand>
        <name>substrate</name>
    </ligand>
</feature>
<comment type="catalytic activity">
    <reaction evidence="2">
        <text>orotidine 5'-phosphate + H(+) = UMP + CO2</text>
        <dbReference type="Rhea" id="RHEA:11596"/>
        <dbReference type="ChEBI" id="CHEBI:15378"/>
        <dbReference type="ChEBI" id="CHEBI:16526"/>
        <dbReference type="ChEBI" id="CHEBI:57538"/>
        <dbReference type="ChEBI" id="CHEBI:57865"/>
        <dbReference type="EC" id="4.1.1.23"/>
    </reaction>
</comment>
<comment type="pathway">
    <text>Pyrimidine metabolism; UMP biosynthesis via de novo pathway; UMP from orotate: step 2/2.</text>
</comment>
<comment type="similarity">
    <text evidence="3">Belongs to the OMP decarboxylase family.</text>
</comment>
<sequence length="278" mass="30000">MSSKSQLTYTARAQSHPNPLARKLFQVAEEKKSNVTVSADVTTTKELLDLADPSTGLGPYIAVIKTHIDILSDFSQETIDGLNALAQKHNFLIFEDRKFIDIGNTVQKQYHNGTLRISEWAHIINCSILPGEGIVEALAQTAQATDFPYGSERGLLILAEMTSKGSLATGAYTSASVDIARKYPSFVLGFVSTRSLGEVESTEAPASEDFVVFTTGVNLSSKGDKLGQQYQTPQSAVGRGADFIISGRGIYAAADPVEAAKQYQQQGWEAYLARVGAQ</sequence>
<keyword id="KW-0210">Decarboxylase</keyword>
<keyword id="KW-0456">Lyase</keyword>
<keyword id="KW-0665">Pyrimidine biosynthesis</keyword>
<dbReference type="EC" id="4.1.1.23"/>
<dbReference type="EMBL" id="X08037">
    <property type="protein sequence ID" value="CAA30835.1"/>
    <property type="molecule type" value="Genomic_DNA"/>
</dbReference>
<dbReference type="PIR" id="S01287">
    <property type="entry name" value="DCPLOC"/>
</dbReference>
<dbReference type="SMR" id="P09463"/>
<dbReference type="UniPathway" id="UPA00070">
    <property type="reaction ID" value="UER00120"/>
</dbReference>
<dbReference type="GO" id="GO:0004588">
    <property type="term" value="F:orotate phosphoribosyltransferase activity"/>
    <property type="evidence" value="ECO:0007669"/>
    <property type="project" value="TreeGrafter"/>
</dbReference>
<dbReference type="GO" id="GO:0004590">
    <property type="term" value="F:orotidine-5'-phosphate decarboxylase activity"/>
    <property type="evidence" value="ECO:0007669"/>
    <property type="project" value="UniProtKB-EC"/>
</dbReference>
<dbReference type="GO" id="GO:0006207">
    <property type="term" value="P:'de novo' pyrimidine nucleobase biosynthetic process"/>
    <property type="evidence" value="ECO:0007669"/>
    <property type="project" value="InterPro"/>
</dbReference>
<dbReference type="GO" id="GO:0044205">
    <property type="term" value="P:'de novo' UMP biosynthetic process"/>
    <property type="evidence" value="ECO:0007669"/>
    <property type="project" value="UniProtKB-UniPathway"/>
</dbReference>
<dbReference type="CDD" id="cd04725">
    <property type="entry name" value="OMP_decarboxylase_like"/>
    <property type="match status" value="1"/>
</dbReference>
<dbReference type="FunFam" id="3.20.20.70:FF:000114">
    <property type="entry name" value="Decarboxylase,orotidine phosphate"/>
    <property type="match status" value="1"/>
</dbReference>
<dbReference type="Gene3D" id="3.20.20.70">
    <property type="entry name" value="Aldolase class I"/>
    <property type="match status" value="1"/>
</dbReference>
<dbReference type="InterPro" id="IPR013785">
    <property type="entry name" value="Aldolase_TIM"/>
</dbReference>
<dbReference type="InterPro" id="IPR014732">
    <property type="entry name" value="OMPdecase"/>
</dbReference>
<dbReference type="InterPro" id="IPR018089">
    <property type="entry name" value="OMPdecase_AS"/>
</dbReference>
<dbReference type="InterPro" id="IPR001754">
    <property type="entry name" value="OMPdeCOase_dom"/>
</dbReference>
<dbReference type="InterPro" id="IPR011060">
    <property type="entry name" value="RibuloseP-bd_barrel"/>
</dbReference>
<dbReference type="NCBIfam" id="TIGR01740">
    <property type="entry name" value="pyrF"/>
    <property type="match status" value="1"/>
</dbReference>
<dbReference type="PANTHER" id="PTHR19278">
    <property type="entry name" value="OROTATE PHOSPHORIBOSYLTRANSFERASE"/>
    <property type="match status" value="1"/>
</dbReference>
<dbReference type="PANTHER" id="PTHR19278:SF9">
    <property type="entry name" value="URIDINE 5'-MONOPHOSPHATE SYNTHASE"/>
    <property type="match status" value="1"/>
</dbReference>
<dbReference type="Pfam" id="PF00215">
    <property type="entry name" value="OMPdecase"/>
    <property type="match status" value="1"/>
</dbReference>
<dbReference type="SMART" id="SM00934">
    <property type="entry name" value="OMPdecase"/>
    <property type="match status" value="1"/>
</dbReference>
<dbReference type="SUPFAM" id="SSF51366">
    <property type="entry name" value="Ribulose-phoshate binding barrel"/>
    <property type="match status" value="1"/>
</dbReference>
<dbReference type="PROSITE" id="PS00156">
    <property type="entry name" value="OMPDECASE"/>
    <property type="match status" value="1"/>
</dbReference>
<reference key="1">
    <citation type="journal article" date="1988" name="Nucleic Acids Res.">
        <title>Nucleotide sequence of the Penicillium chrysogenum pyrG (orotidine-5'-phosphate decarboxylase) gene.</title>
        <authorList>
            <person name="Cantoral J.M."/>
            <person name="Barredo J.L."/>
            <person name="Alvarez E."/>
            <person name="Diez B."/>
            <person name="Martin J.F."/>
        </authorList>
    </citation>
    <scope>NUCLEOTIDE SEQUENCE [GENOMIC DNA]</scope>
    <source>
        <strain>AS-P-78</strain>
    </source>
</reference>
<accession>P09463</accession>
<evidence type="ECO:0000250" key="1"/>
<evidence type="ECO:0000255" key="2">
    <source>
        <dbReference type="PROSITE-ProRule" id="PRU10110"/>
    </source>
</evidence>
<evidence type="ECO:0000305" key="3"/>